<evidence type="ECO:0000250" key="1"/>
<evidence type="ECO:0000250" key="2">
    <source>
        <dbReference type="UniProtKB" id="P78536"/>
    </source>
</evidence>
<evidence type="ECO:0000250" key="3">
    <source>
        <dbReference type="UniProtKB" id="Q9Z0F8"/>
    </source>
</evidence>
<evidence type="ECO:0000255" key="4"/>
<evidence type="ECO:0000255" key="5">
    <source>
        <dbReference type="PROSITE-ProRule" id="PRU00068"/>
    </source>
</evidence>
<evidence type="ECO:0000255" key="6">
    <source>
        <dbReference type="PROSITE-ProRule" id="PRU00276"/>
    </source>
</evidence>
<evidence type="ECO:0000255" key="7">
    <source>
        <dbReference type="PROSITE-ProRule" id="PRU10095"/>
    </source>
</evidence>
<evidence type="ECO:0000256" key="8">
    <source>
        <dbReference type="SAM" id="MobiDB-lite"/>
    </source>
</evidence>
<evidence type="ECO:0000269" key="9">
    <source>
    </source>
</evidence>
<evidence type="ECO:0007744" key="10">
    <source>
    </source>
</evidence>
<keyword id="KW-0165">Cleavage on pair of basic residues</keyword>
<keyword id="KW-1015">Disulfide bond</keyword>
<keyword id="KW-0325">Glycoprotein</keyword>
<keyword id="KW-0378">Hydrolase</keyword>
<keyword id="KW-0472">Membrane</keyword>
<keyword id="KW-0479">Metal-binding</keyword>
<keyword id="KW-0482">Metalloprotease</keyword>
<keyword id="KW-0914">Notch signaling pathway</keyword>
<keyword id="KW-0597">Phosphoprotein</keyword>
<keyword id="KW-0645">Protease</keyword>
<keyword id="KW-1185">Reference proteome</keyword>
<keyword id="KW-0729">SH3-binding</keyword>
<keyword id="KW-0732">Signal</keyword>
<keyword id="KW-0812">Transmembrane</keyword>
<keyword id="KW-1133">Transmembrane helix</keyword>
<keyword id="KW-0862">Zinc</keyword>
<keyword id="KW-0865">Zymogen</keyword>
<organism>
    <name type="scientific">Rattus norvegicus</name>
    <name type="common">Rat</name>
    <dbReference type="NCBI Taxonomy" id="10116"/>
    <lineage>
        <taxon>Eukaryota</taxon>
        <taxon>Metazoa</taxon>
        <taxon>Chordata</taxon>
        <taxon>Craniata</taxon>
        <taxon>Vertebrata</taxon>
        <taxon>Euteleostomi</taxon>
        <taxon>Mammalia</taxon>
        <taxon>Eutheria</taxon>
        <taxon>Euarchontoglires</taxon>
        <taxon>Glires</taxon>
        <taxon>Rodentia</taxon>
        <taxon>Myomorpha</taxon>
        <taxon>Muroidea</taxon>
        <taxon>Muridae</taxon>
        <taxon>Murinae</taxon>
        <taxon>Rattus</taxon>
    </lineage>
</organism>
<sequence>MRQRLLFLTTLVPFVLAPRPPEEPGSGSHLRLEKLDSLLSDYDILSLSNIQQHSIRKRDLQSATHLETLLTFSALKRHFKLYLTSSTERFSQNLRVVVVDGKEESEYSVKWQDFFSGHVVGEPDSRVLAHIGDDDVTVRINTDGAEYNIEPLWRFVNDTKDKRMLVYKSEDIKDFSRLQSPKVCGYLNADSEELLPKGLIDREPSEEFVRRVKRRAEPNPLKNTCKLLVVADHRFYKYMGRGEESTTTNYLIELIDRVDDIYRNTSWDNAGFKGYGVQIEQIRILKSPQEVKPGERHFNMAKSFPNEEKDAWDVKMLLEQFSLDIAEEASKVCLAHLFTYQDFDMGTLGLAYVGSPRANSHGGVCPKAYYNPGVKKNIYLNSGLTSTKNYGKTILTKEADLVTTHELGHNFGAEHDPDGLAECAPNEDQGGKYVMYPIAVSGDHENNKMFSNCSKQSIYKTIESKAQECFQERSNKVCGNSRVDEGEECDPGIMYLNNDTCCNSDCTLKPGVQCSDRNSPCCKNCQFETAQKKCQEAINATCKGVSYCTGNSSECPPPGDAEDDTVCLDLGKCKAGKCIPFCKREQELESCACADTDNSCKVCCRNLSGPCVPYVDAEQKNLFLRKGKPCTVGFCDMNGKCEKRVQDVIERFWDFIDQLSINTFGKFLADNIVGSVLVFSLIFWIPFSILVHCVDKKLDKQYESLSLFHHSNIEMLSSMDSASVRIIKPFPAPQTPGRLQALQPAAMMPPVSAAPKLDHQRMDTIQEDPSTDSHVDDDGFEKDPFPNSSAAAKSFEDLTDHPVTRSEKAASFKLQRQSRVDSKETEC</sequence>
<comment type="function">
    <text evidence="2 3">Transmembrane metalloprotease which mediates the ectodomain shedding of a myriad of transmembrane proteins including adhesion proteins, growth factor precursors and cytokines important for inflammation and immunity (By similarity). Cleaves the membrane-bound precursor of TNF-alpha to its mature soluble form. Responsible for the proteolytical release of soluble JAM3 from endothelial cells surface. Responsible for the proteolytic release of several other cell-surface proteins, including p75 TNF-receptor, interleukin 1 receptor type II, p55 TNF-receptor, transforming growth factor-alpha, L-selectin, growth hormone receptor, MUC1 and the amyloid precursor protein. Acts as an activator of Notch pathway by mediating cleavage of Notch, generating the membrane-associated intermediate fragment called Notch extracellular truncation (NEXT). Plays a role in the proteolytic processing of ACE2 (By similarity). Plays a role in hemostasis through shedding of GP1BA, the platelet glycoprotein Ib alpha chain (By similarity). Mediates the proteolytic cleavage of LAG3, leading to release the secreted form of LAG3 (By similarity). Mediates the proteolytic cleavage of IL6R, leading to the release of secreted form of IL6R. Mediates the proteolytic cleavage and shedding of FCGR3A upon NK cell stimulation, a mechanism that allows for increased NK cell motility and detachment from opsonized target cells (By similarity). Cleaves TREM2, resulting in shedding of the TREM2 ectodomain (By similarity).</text>
</comment>
<comment type="catalytic activity">
    <reaction evidence="2">
        <text>Narrow endopeptidase specificity. Cleaves Pro-Leu-Ala-Gln-Ala-|-Val-Arg-Ser-Ser-Ser in the membrane-bound, 26-kDa form of tumor necrosis factor alpha (TNFalpha). Similarly cleaves other membrane-anchored, cell-surface proteins to 'shed' the extracellular domains.</text>
        <dbReference type="EC" id="3.4.24.86"/>
    </reaction>
</comment>
<comment type="cofactor">
    <cofactor evidence="2">
        <name>Zn(2+)</name>
        <dbReference type="ChEBI" id="CHEBI:29105"/>
    </cofactor>
    <text evidence="2">Binds 1 zinc ion per subunit.</text>
</comment>
<comment type="subunit">
    <text evidence="2">Interacts with MAD2L1, MAPK14 and MUC1. Interacts with iRhom1/RHBDF1 and iRhom2/RHBDF2. Interacts with FRMD8 via its interaction with iRhom1/RHBDF1 and iRhom2/RHBDF2. Interacts with TSPAN8.</text>
</comment>
<comment type="subcellular location">
    <subcellularLocation>
        <location evidence="4">Membrane</location>
        <topology evidence="4">Single-pass type I membrane protein</topology>
    </subcellularLocation>
</comment>
<comment type="domain">
    <text evidence="1">Must be membrane anchored to cleave the different substrates. The cytoplasmic domain is not required for the this activity. Only the catalytic domain is essential to shed TNF and p75 TNFR (By similarity).</text>
</comment>
<comment type="domain">
    <text>The conserved cysteine present in the cysteine-switch motif binds the catalytic zinc ion, thus inhibiting the enzyme. The dissociation of the cysteine from the zinc ion upon the activation-peptide release activates the enzyme.</text>
</comment>
<comment type="PTM">
    <text evidence="1">The precursor is cleaved by a furin endopeptidase.</text>
</comment>
<comment type="PTM">
    <text evidence="2">Phosphorylated. Stimulation by growth factor or phorbol 12-myristate 13-acetate induces phosphorylation of Ser-822 but decreases phosphorylation of Ser-794. Phosphorylation at Thr-735 by MAPK14 is required for ADAM17-mediated ectodomain shedding (By similarity).</text>
</comment>
<gene>
    <name type="primary">Adam17</name>
    <name type="synonym">Tace</name>
</gene>
<name>ADA17_RAT</name>
<protein>
    <recommendedName>
        <fullName>Disintegrin and metalloproteinase domain-containing protein 17</fullName>
        <shortName>ADAM 17</shortName>
        <ecNumber evidence="2">3.4.24.86</ecNumber>
    </recommendedName>
    <alternativeName>
        <fullName>TNF-alpha convertase</fullName>
    </alternativeName>
    <alternativeName>
        <fullName>TNF-alpha-converting enzyme</fullName>
    </alternativeName>
    <cdAntigenName>CD156b</cdAntigenName>
</protein>
<accession>Q9Z1K9</accession>
<dbReference type="EC" id="3.4.24.86" evidence="2"/>
<dbReference type="EMBL" id="AJ012603">
    <property type="protein sequence ID" value="CAA10072.1"/>
    <property type="molecule type" value="mRNA"/>
</dbReference>
<dbReference type="RefSeq" id="NP_064702.1">
    <property type="nucleotide sequence ID" value="NM_020306.2"/>
</dbReference>
<dbReference type="SMR" id="Q9Z1K9"/>
<dbReference type="BioGRID" id="248605">
    <property type="interactions" value="1"/>
</dbReference>
<dbReference type="FunCoup" id="Q9Z1K9">
    <property type="interactions" value="3312"/>
</dbReference>
<dbReference type="IntAct" id="Q9Z1K9">
    <property type="interactions" value="1"/>
</dbReference>
<dbReference type="STRING" id="10116.ENSRNOP00000073012"/>
<dbReference type="BindingDB" id="Q9Z1K9"/>
<dbReference type="ChEMBL" id="CHEMBL2523"/>
<dbReference type="MEROPS" id="M12.217"/>
<dbReference type="GlyCosmos" id="Q9Z1K9">
    <property type="glycosylation" value="7 sites, No reported glycans"/>
</dbReference>
<dbReference type="GlyGen" id="Q9Z1K9">
    <property type="glycosylation" value="7 sites"/>
</dbReference>
<dbReference type="iPTMnet" id="Q9Z1K9"/>
<dbReference type="PhosphoSitePlus" id="Q9Z1K9"/>
<dbReference type="SwissPalm" id="Q9Z1K9"/>
<dbReference type="PaxDb" id="10116-ENSRNOP00000010648"/>
<dbReference type="GeneID" id="57027"/>
<dbReference type="KEGG" id="rno:57027"/>
<dbReference type="AGR" id="RGD:620404"/>
<dbReference type="CTD" id="6868"/>
<dbReference type="RGD" id="620404">
    <property type="gene designation" value="Adam17"/>
</dbReference>
<dbReference type="eggNOG" id="KOG3658">
    <property type="taxonomic scope" value="Eukaryota"/>
</dbReference>
<dbReference type="InParanoid" id="Q9Z1K9"/>
<dbReference type="OrthoDB" id="2131567at2759"/>
<dbReference type="PhylomeDB" id="Q9Z1K9"/>
<dbReference type="BRENDA" id="3.4.24.86">
    <property type="organism ID" value="5301"/>
</dbReference>
<dbReference type="Reactome" id="R-RNO-193692">
    <property type="pathway name" value="Regulated proteolysis of p75NTR"/>
</dbReference>
<dbReference type="Reactome" id="R-RNO-75893">
    <property type="pathway name" value="TNF signaling"/>
</dbReference>
<dbReference type="PRO" id="PR:Q9Z1K9"/>
<dbReference type="Proteomes" id="UP000002494">
    <property type="component" value="Unplaced"/>
</dbReference>
<dbReference type="GO" id="GO:0015629">
    <property type="term" value="C:actin cytoskeleton"/>
    <property type="evidence" value="ECO:0000266"/>
    <property type="project" value="RGD"/>
</dbReference>
<dbReference type="GO" id="GO:0045177">
    <property type="term" value="C:apical part of cell"/>
    <property type="evidence" value="ECO:0000314"/>
    <property type="project" value="RGD"/>
</dbReference>
<dbReference type="GO" id="GO:0016324">
    <property type="term" value="C:apical plasma membrane"/>
    <property type="evidence" value="ECO:0000266"/>
    <property type="project" value="RGD"/>
</dbReference>
<dbReference type="GO" id="GO:0009986">
    <property type="term" value="C:cell surface"/>
    <property type="evidence" value="ECO:0000314"/>
    <property type="project" value="RGD"/>
</dbReference>
<dbReference type="GO" id="GO:0005911">
    <property type="term" value="C:cell-cell junction"/>
    <property type="evidence" value="ECO:0000266"/>
    <property type="project" value="RGD"/>
</dbReference>
<dbReference type="GO" id="GO:0005737">
    <property type="term" value="C:cytoplasm"/>
    <property type="evidence" value="ECO:0000266"/>
    <property type="project" value="RGD"/>
</dbReference>
<dbReference type="GO" id="GO:0005925">
    <property type="term" value="C:focal adhesion"/>
    <property type="evidence" value="ECO:0000266"/>
    <property type="project" value="RGD"/>
</dbReference>
<dbReference type="GO" id="GO:0016020">
    <property type="term" value="C:membrane"/>
    <property type="evidence" value="ECO:0000266"/>
    <property type="project" value="RGD"/>
</dbReference>
<dbReference type="GO" id="GO:0045121">
    <property type="term" value="C:membrane raft"/>
    <property type="evidence" value="ECO:0000266"/>
    <property type="project" value="RGD"/>
</dbReference>
<dbReference type="GO" id="GO:0005886">
    <property type="term" value="C:plasma membrane"/>
    <property type="evidence" value="ECO:0000266"/>
    <property type="project" value="RGD"/>
</dbReference>
<dbReference type="GO" id="GO:0032587">
    <property type="term" value="C:ruffle membrane"/>
    <property type="evidence" value="ECO:0000266"/>
    <property type="project" value="RGD"/>
</dbReference>
<dbReference type="GO" id="GO:0019955">
    <property type="term" value="F:cytokine binding"/>
    <property type="evidence" value="ECO:0000266"/>
    <property type="project" value="RGD"/>
</dbReference>
<dbReference type="GO" id="GO:0004175">
    <property type="term" value="F:endopeptidase activity"/>
    <property type="evidence" value="ECO:0000250"/>
    <property type="project" value="UniProtKB"/>
</dbReference>
<dbReference type="GO" id="GO:0005178">
    <property type="term" value="F:integrin binding"/>
    <property type="evidence" value="ECO:0000266"/>
    <property type="project" value="RGD"/>
</dbReference>
<dbReference type="GO" id="GO:0005138">
    <property type="term" value="F:interleukin-6 receptor binding"/>
    <property type="evidence" value="ECO:0000266"/>
    <property type="project" value="RGD"/>
</dbReference>
<dbReference type="GO" id="GO:0046872">
    <property type="term" value="F:metal ion binding"/>
    <property type="evidence" value="ECO:0007669"/>
    <property type="project" value="UniProtKB-KW"/>
</dbReference>
<dbReference type="GO" id="GO:0070573">
    <property type="term" value="F:metallodipeptidase activity"/>
    <property type="evidence" value="ECO:0000266"/>
    <property type="project" value="RGD"/>
</dbReference>
<dbReference type="GO" id="GO:0004222">
    <property type="term" value="F:metalloendopeptidase activity"/>
    <property type="evidence" value="ECO:0000250"/>
    <property type="project" value="UniProtKB"/>
</dbReference>
<dbReference type="GO" id="GO:1902945">
    <property type="term" value="F:metalloendopeptidase activity involved in amyloid precursor protein catabolic process"/>
    <property type="evidence" value="ECO:0000266"/>
    <property type="project" value="RGD"/>
</dbReference>
<dbReference type="GO" id="GO:0008237">
    <property type="term" value="F:metallopeptidase activity"/>
    <property type="evidence" value="ECO:0000266"/>
    <property type="project" value="RGD"/>
</dbReference>
<dbReference type="GO" id="GO:0005112">
    <property type="term" value="F:Notch binding"/>
    <property type="evidence" value="ECO:0000250"/>
    <property type="project" value="UniProtKB"/>
</dbReference>
<dbReference type="GO" id="GO:0030165">
    <property type="term" value="F:PDZ domain binding"/>
    <property type="evidence" value="ECO:0000266"/>
    <property type="project" value="RGD"/>
</dbReference>
<dbReference type="GO" id="GO:0017124">
    <property type="term" value="F:SH3 domain binding"/>
    <property type="evidence" value="ECO:0007669"/>
    <property type="project" value="UniProtKB-KW"/>
</dbReference>
<dbReference type="GO" id="GO:0043120">
    <property type="term" value="F:tumor necrosis factor binding"/>
    <property type="evidence" value="ECO:0000266"/>
    <property type="project" value="RGD"/>
</dbReference>
<dbReference type="GO" id="GO:0042987">
    <property type="term" value="P:amyloid precursor protein catabolic process"/>
    <property type="evidence" value="ECO:0000266"/>
    <property type="project" value="RGD"/>
</dbReference>
<dbReference type="GO" id="GO:0030183">
    <property type="term" value="P:B cell differentiation"/>
    <property type="evidence" value="ECO:0000266"/>
    <property type="project" value="RGD"/>
</dbReference>
<dbReference type="GO" id="GO:0007155">
    <property type="term" value="P:cell adhesion"/>
    <property type="evidence" value="ECO:0000266"/>
    <property type="project" value="RGD"/>
</dbReference>
<dbReference type="GO" id="GO:0033627">
    <property type="term" value="P:cell adhesion mediated by integrin"/>
    <property type="evidence" value="ECO:0000266"/>
    <property type="project" value="RGD"/>
</dbReference>
<dbReference type="GO" id="GO:0048870">
    <property type="term" value="P:cell motility"/>
    <property type="evidence" value="ECO:0000266"/>
    <property type="project" value="RGD"/>
</dbReference>
<dbReference type="GO" id="GO:0071403">
    <property type="term" value="P:cellular response to high density lipoprotein particle stimulus"/>
    <property type="evidence" value="ECO:0000266"/>
    <property type="project" value="RGD"/>
</dbReference>
<dbReference type="GO" id="GO:0071260">
    <property type="term" value="P:cellular response to mechanical stimulus"/>
    <property type="evidence" value="ECO:0000270"/>
    <property type="project" value="RGD"/>
</dbReference>
<dbReference type="GO" id="GO:0071679">
    <property type="term" value="P:commissural neuron axon guidance"/>
    <property type="evidence" value="ECO:0000266"/>
    <property type="project" value="RGD"/>
</dbReference>
<dbReference type="GO" id="GO:0050830">
    <property type="term" value="P:defense response to Gram-positive bacterium"/>
    <property type="evidence" value="ECO:0000266"/>
    <property type="project" value="RGD"/>
</dbReference>
<dbReference type="GO" id="GO:0007173">
    <property type="term" value="P:epidermal growth factor receptor signaling pathway"/>
    <property type="evidence" value="ECO:0000266"/>
    <property type="project" value="RGD"/>
</dbReference>
<dbReference type="GO" id="GO:0002467">
    <property type="term" value="P:germinal center formation"/>
    <property type="evidence" value="ECO:0000266"/>
    <property type="project" value="RGD"/>
</dbReference>
<dbReference type="GO" id="GO:0006509">
    <property type="term" value="P:membrane protein ectodomain proteolysis"/>
    <property type="evidence" value="ECO:0000315"/>
    <property type="project" value="RGD"/>
</dbReference>
<dbReference type="GO" id="GO:0043066">
    <property type="term" value="P:negative regulation of apoptotic process"/>
    <property type="evidence" value="ECO:0000314"/>
    <property type="project" value="RGD"/>
</dbReference>
<dbReference type="GO" id="GO:0120163">
    <property type="term" value="P:negative regulation of cold-induced thermogenesis"/>
    <property type="evidence" value="ECO:0000250"/>
    <property type="project" value="YuBioLab"/>
</dbReference>
<dbReference type="GO" id="GO:0010977">
    <property type="term" value="P:negative regulation of neuron projection development"/>
    <property type="evidence" value="ECO:0000266"/>
    <property type="project" value="RGD"/>
</dbReference>
<dbReference type="GO" id="GO:0030512">
    <property type="term" value="P:negative regulation of transforming growth factor beta receptor signaling pathway"/>
    <property type="evidence" value="ECO:0000266"/>
    <property type="project" value="RGD"/>
</dbReference>
<dbReference type="GO" id="GO:0007220">
    <property type="term" value="P:Notch receptor processing"/>
    <property type="evidence" value="ECO:0000250"/>
    <property type="project" value="UniProtKB"/>
</dbReference>
<dbReference type="GO" id="GO:0007219">
    <property type="term" value="P:Notch signaling pathway"/>
    <property type="evidence" value="ECO:0000318"/>
    <property type="project" value="GO_Central"/>
</dbReference>
<dbReference type="GO" id="GO:0043491">
    <property type="term" value="P:phosphatidylinositol 3-kinase/protein kinase B signal transduction"/>
    <property type="evidence" value="ECO:0000266"/>
    <property type="project" value="RGD"/>
</dbReference>
<dbReference type="GO" id="GO:0043065">
    <property type="term" value="P:positive regulation of apoptotic process"/>
    <property type="evidence" value="ECO:0000315"/>
    <property type="project" value="RGD"/>
</dbReference>
<dbReference type="GO" id="GO:0043536">
    <property type="term" value="P:positive regulation of blood vessel endothelial cell migration"/>
    <property type="evidence" value="ECO:0000266"/>
    <property type="project" value="RGD"/>
</dbReference>
<dbReference type="GO" id="GO:0030307">
    <property type="term" value="P:positive regulation of cell growth"/>
    <property type="evidence" value="ECO:0000266"/>
    <property type="project" value="RGD"/>
</dbReference>
<dbReference type="GO" id="GO:0030335">
    <property type="term" value="P:positive regulation of cell migration"/>
    <property type="evidence" value="ECO:0000266"/>
    <property type="project" value="RGD"/>
</dbReference>
<dbReference type="GO" id="GO:0008284">
    <property type="term" value="P:positive regulation of cell population proliferation"/>
    <property type="evidence" value="ECO:0000266"/>
    <property type="project" value="RGD"/>
</dbReference>
<dbReference type="GO" id="GO:0032722">
    <property type="term" value="P:positive regulation of chemokine production"/>
    <property type="evidence" value="ECO:0000266"/>
    <property type="project" value="RGD"/>
</dbReference>
<dbReference type="GO" id="GO:0045742">
    <property type="term" value="P:positive regulation of epidermal growth factor receptor signaling pathway"/>
    <property type="evidence" value="ECO:0000266"/>
    <property type="project" value="RGD"/>
</dbReference>
<dbReference type="GO" id="GO:0070374">
    <property type="term" value="P:positive regulation of ERK1 and ERK2 cascade"/>
    <property type="evidence" value="ECO:0000315"/>
    <property type="project" value="RGD"/>
</dbReference>
<dbReference type="GO" id="GO:1900087">
    <property type="term" value="P:positive regulation of G1/S transition of mitotic cell cycle"/>
    <property type="evidence" value="ECO:0000266"/>
    <property type="project" value="RGD"/>
</dbReference>
<dbReference type="GO" id="GO:0010976">
    <property type="term" value="P:positive regulation of neuron projection development"/>
    <property type="evidence" value="ECO:0000315"/>
    <property type="project" value="RGD"/>
</dbReference>
<dbReference type="GO" id="GO:0010820">
    <property type="term" value="P:positive regulation of T cell chemotaxis"/>
    <property type="evidence" value="ECO:0000266"/>
    <property type="project" value="RGD"/>
</dbReference>
<dbReference type="GO" id="GO:0032760">
    <property type="term" value="P:positive regulation of tumor necrosis factor production"/>
    <property type="evidence" value="ECO:0000266"/>
    <property type="project" value="RGD"/>
</dbReference>
<dbReference type="GO" id="GO:1903265">
    <property type="term" value="P:positive regulation of tumor necrosis factor-mediated signaling pathway"/>
    <property type="evidence" value="ECO:0000266"/>
    <property type="project" value="RGD"/>
</dbReference>
<dbReference type="GO" id="GO:1905564">
    <property type="term" value="P:positive regulation of vascular endothelial cell proliferation"/>
    <property type="evidence" value="ECO:0000266"/>
    <property type="project" value="RGD"/>
</dbReference>
<dbReference type="GO" id="GO:0002532">
    <property type="term" value="P:production of molecular mediator involved in inflammatory response"/>
    <property type="evidence" value="ECO:0000266"/>
    <property type="project" value="RGD"/>
</dbReference>
<dbReference type="GO" id="GO:0016485">
    <property type="term" value="P:protein processing"/>
    <property type="evidence" value="ECO:0000266"/>
    <property type="project" value="RGD"/>
</dbReference>
<dbReference type="GO" id="GO:0006508">
    <property type="term" value="P:proteolysis"/>
    <property type="evidence" value="ECO:0000250"/>
    <property type="project" value="UniProtKB"/>
</dbReference>
<dbReference type="GO" id="GO:0048679">
    <property type="term" value="P:regulation of axon regeneration"/>
    <property type="evidence" value="ECO:0000266"/>
    <property type="project" value="RGD"/>
</dbReference>
<dbReference type="GO" id="GO:0033025">
    <property type="term" value="P:regulation of mast cell apoptotic process"/>
    <property type="evidence" value="ECO:0000266"/>
    <property type="project" value="RGD"/>
</dbReference>
<dbReference type="GO" id="GO:2001222">
    <property type="term" value="P:regulation of neuron migration"/>
    <property type="evidence" value="ECO:0000266"/>
    <property type="project" value="RGD"/>
</dbReference>
<dbReference type="GO" id="GO:0097327">
    <property type="term" value="P:response to antineoplastic agent"/>
    <property type="evidence" value="ECO:0000270"/>
    <property type="project" value="RGD"/>
</dbReference>
<dbReference type="GO" id="GO:1990910">
    <property type="term" value="P:response to hypobaric hypoxia"/>
    <property type="evidence" value="ECO:0000270"/>
    <property type="project" value="RGD"/>
</dbReference>
<dbReference type="GO" id="GO:0001666">
    <property type="term" value="P:response to hypoxia"/>
    <property type="evidence" value="ECO:0000266"/>
    <property type="project" value="RGD"/>
</dbReference>
<dbReference type="GO" id="GO:0032496">
    <property type="term" value="P:response to lipopolysaccharide"/>
    <property type="evidence" value="ECO:0000266"/>
    <property type="project" value="RGD"/>
</dbReference>
<dbReference type="GO" id="GO:0014850">
    <property type="term" value="P:response to muscle activity"/>
    <property type="evidence" value="ECO:0000270"/>
    <property type="project" value="RGD"/>
</dbReference>
<dbReference type="GO" id="GO:0031667">
    <property type="term" value="P:response to nutrient levels"/>
    <property type="evidence" value="ECO:0000270"/>
    <property type="project" value="RGD"/>
</dbReference>
<dbReference type="GO" id="GO:0009410">
    <property type="term" value="P:response to xenobiotic stimulus"/>
    <property type="evidence" value="ECO:0000266"/>
    <property type="project" value="RGD"/>
</dbReference>
<dbReference type="GO" id="GO:0023061">
    <property type="term" value="P:signal release"/>
    <property type="evidence" value="ECO:0000266"/>
    <property type="project" value="RGD"/>
</dbReference>
<dbReference type="GO" id="GO:0140448">
    <property type="term" value="P:signaling receptor ligand precursor processing"/>
    <property type="evidence" value="ECO:0000266"/>
    <property type="project" value="RGD"/>
</dbReference>
<dbReference type="GO" id="GO:0007283">
    <property type="term" value="P:spermatogenesis"/>
    <property type="evidence" value="ECO:0000270"/>
    <property type="project" value="RGD"/>
</dbReference>
<dbReference type="GO" id="GO:0048536">
    <property type="term" value="P:spleen development"/>
    <property type="evidence" value="ECO:0000266"/>
    <property type="project" value="RGD"/>
</dbReference>
<dbReference type="GO" id="GO:0033077">
    <property type="term" value="P:T cell differentiation in thymus"/>
    <property type="evidence" value="ECO:0000266"/>
    <property type="project" value="RGD"/>
</dbReference>
<dbReference type="GO" id="GO:0033209">
    <property type="term" value="P:tumor necrosis factor-mediated signaling pathway"/>
    <property type="evidence" value="ECO:0000266"/>
    <property type="project" value="RGD"/>
</dbReference>
<dbReference type="GO" id="GO:0035313">
    <property type="term" value="P:wound healing, spreading of epidermal cells"/>
    <property type="evidence" value="ECO:0000266"/>
    <property type="project" value="RGD"/>
</dbReference>
<dbReference type="CDD" id="cd14246">
    <property type="entry name" value="ADAM17_MPD"/>
    <property type="match status" value="1"/>
</dbReference>
<dbReference type="CDD" id="cd04270">
    <property type="entry name" value="ZnMc_TACE_like"/>
    <property type="match status" value="1"/>
</dbReference>
<dbReference type="FunFam" id="3.40.390.10:FF:000017">
    <property type="entry name" value="Disintegrin and metalloproteinase domain-containing protein 17"/>
    <property type="match status" value="1"/>
</dbReference>
<dbReference type="FunFam" id="4.10.70.10:FF:000003">
    <property type="entry name" value="Disintegrin and metalloproteinase domain-containing protein 17"/>
    <property type="match status" value="1"/>
</dbReference>
<dbReference type="FunFam" id="4.10.70.30:FF:000002">
    <property type="entry name" value="Disintegrin and metalloproteinase domain-containing protein 17"/>
    <property type="match status" value="1"/>
</dbReference>
<dbReference type="Gene3D" id="4.10.70.30">
    <property type="match status" value="1"/>
</dbReference>
<dbReference type="Gene3D" id="3.40.390.10">
    <property type="entry name" value="Collagenase (Catalytic Domain)"/>
    <property type="match status" value="1"/>
</dbReference>
<dbReference type="Gene3D" id="4.10.70.10">
    <property type="entry name" value="Disintegrin domain"/>
    <property type="match status" value="1"/>
</dbReference>
<dbReference type="InterPro" id="IPR034025">
    <property type="entry name" value="ADAM10_ADAM17"/>
</dbReference>
<dbReference type="InterPro" id="IPR032029">
    <property type="entry name" value="ADAM17_MPD"/>
</dbReference>
<dbReference type="InterPro" id="IPR051489">
    <property type="entry name" value="ADAM_Metalloproteinase"/>
</dbReference>
<dbReference type="InterPro" id="IPR001762">
    <property type="entry name" value="Disintegrin_dom"/>
</dbReference>
<dbReference type="InterPro" id="IPR036436">
    <property type="entry name" value="Disintegrin_dom_sf"/>
</dbReference>
<dbReference type="InterPro" id="IPR024079">
    <property type="entry name" value="MetalloPept_cat_dom_sf"/>
</dbReference>
<dbReference type="InterPro" id="IPR001590">
    <property type="entry name" value="Peptidase_M12B"/>
</dbReference>
<dbReference type="PANTHER" id="PTHR45702">
    <property type="entry name" value="ADAM10/ADAM17 METALLOPEPTIDASE FAMILY MEMBER"/>
    <property type="match status" value="1"/>
</dbReference>
<dbReference type="PANTHER" id="PTHR45702:SF6">
    <property type="entry name" value="DISINTEGRIN AND METALLOPROTEINASE DOMAIN-CONTAINING PROTEIN 17"/>
    <property type="match status" value="1"/>
</dbReference>
<dbReference type="Pfam" id="PF16698">
    <property type="entry name" value="ADAM17_MPD"/>
    <property type="match status" value="1"/>
</dbReference>
<dbReference type="Pfam" id="PF00200">
    <property type="entry name" value="Disintegrin"/>
    <property type="match status" value="1"/>
</dbReference>
<dbReference type="Pfam" id="PF13688">
    <property type="entry name" value="Reprolysin_5"/>
    <property type="match status" value="1"/>
</dbReference>
<dbReference type="SMART" id="SM00050">
    <property type="entry name" value="DISIN"/>
    <property type="match status" value="1"/>
</dbReference>
<dbReference type="SUPFAM" id="SSF57552">
    <property type="entry name" value="Blood coagulation inhibitor (disintegrin)"/>
    <property type="match status" value="1"/>
</dbReference>
<dbReference type="SUPFAM" id="SSF55486">
    <property type="entry name" value="Metalloproteases ('zincins'), catalytic domain"/>
    <property type="match status" value="1"/>
</dbReference>
<dbReference type="PROSITE" id="PS50215">
    <property type="entry name" value="ADAM_MEPRO"/>
    <property type="match status" value="1"/>
</dbReference>
<dbReference type="PROSITE" id="PS50214">
    <property type="entry name" value="DISINTEGRIN_2"/>
    <property type="match status" value="1"/>
</dbReference>
<dbReference type="PROSITE" id="PS00142">
    <property type="entry name" value="ZINC_PROTEASE"/>
    <property type="match status" value="1"/>
</dbReference>
<reference key="1">
    <citation type="submission" date="1998-11" db="EMBL/GenBank/DDBJ databases">
        <title>Sequence analysis of rat TNF-alpha converting enzyme (TACE) cDNA.</title>
        <authorList>
            <person name="Hall L."/>
            <person name="Beaumont A.J."/>
            <person name="Jury J.A."/>
            <person name="Frayne J."/>
        </authorList>
    </citation>
    <scope>NUCLEOTIDE SEQUENCE [MRNA]</scope>
    <source>
        <tissue>Testis</tissue>
    </source>
</reference>
<reference key="2">
    <citation type="journal article" date="2012" name="Nat. Commun.">
        <title>Quantitative maps of protein phosphorylation sites across 14 different rat organs and tissues.</title>
        <authorList>
            <person name="Lundby A."/>
            <person name="Secher A."/>
            <person name="Lage K."/>
            <person name="Nordsborg N.B."/>
            <person name="Dmytriyev A."/>
            <person name="Lundby C."/>
            <person name="Olsen J.V."/>
        </authorList>
    </citation>
    <scope>PHOSPHORYLATION [LARGE SCALE ANALYSIS] AT SER-770 AND SER-794</scope>
    <scope>IDENTIFICATION BY MASS SPECTROMETRY [LARGE SCALE ANALYSIS]</scope>
</reference>
<reference key="3">
    <citation type="journal article" date="2015" name="J. Proteome Res.">
        <title>Peptidomics for studying limited proteolysis.</title>
        <authorList>
            <person name="Tsuchiya T."/>
            <person name="Osaki T."/>
            <person name="Minamino N."/>
            <person name="Sasaki K."/>
        </authorList>
    </citation>
    <scope>CLEAVAGE OF SIGNAL PEPTIDE AFTER ALA-17</scope>
    <scope>IDENTIFICATION BY MASS SPECTROMETRY</scope>
</reference>
<proteinExistence type="evidence at protein level"/>
<feature type="signal peptide" evidence="9">
    <location>
        <begin position="1"/>
        <end position="17"/>
    </location>
</feature>
<feature type="propeptide" id="PRO_0000029092" evidence="2">
    <location>
        <begin position="18"/>
        <end position="214"/>
    </location>
</feature>
<feature type="chain" id="PRO_0000029093" description="Disintegrin and metalloproteinase domain-containing protein 17">
    <location>
        <begin position="215"/>
        <end position="827"/>
    </location>
</feature>
<feature type="topological domain" description="Extracellular" evidence="4">
    <location>
        <begin position="215"/>
        <end position="671"/>
    </location>
</feature>
<feature type="transmembrane region" description="Helical" evidence="4">
    <location>
        <begin position="672"/>
        <end position="692"/>
    </location>
</feature>
<feature type="topological domain" description="Cytoplasmic" evidence="4">
    <location>
        <begin position="693"/>
        <end position="827"/>
    </location>
</feature>
<feature type="domain" description="Peptidase M12B" evidence="6">
    <location>
        <begin position="223"/>
        <end position="474"/>
    </location>
</feature>
<feature type="domain" description="Disintegrin" evidence="5">
    <location>
        <begin position="475"/>
        <end position="563"/>
    </location>
</feature>
<feature type="region of interest" description="Crambin-like">
    <location>
        <begin position="603"/>
        <end position="671"/>
    </location>
</feature>
<feature type="region of interest" description="Disordered" evidence="8">
    <location>
        <begin position="766"/>
        <end position="827"/>
    </location>
</feature>
<feature type="short sequence motif" description="Cysteine switch" evidence="1">
    <location>
        <begin position="182"/>
        <end position="189"/>
    </location>
</feature>
<feature type="short sequence motif" description="SH3-binding" evidence="4">
    <location>
        <begin position="731"/>
        <end position="738"/>
    </location>
</feature>
<feature type="compositionally biased region" description="Basic and acidic residues" evidence="8">
    <location>
        <begin position="771"/>
        <end position="784"/>
    </location>
</feature>
<feature type="compositionally biased region" description="Basic and acidic residues" evidence="8">
    <location>
        <begin position="794"/>
        <end position="810"/>
    </location>
</feature>
<feature type="compositionally biased region" description="Basic and acidic residues" evidence="8">
    <location>
        <begin position="818"/>
        <end position="827"/>
    </location>
</feature>
<feature type="active site" evidence="6 7">
    <location>
        <position position="406"/>
    </location>
</feature>
<feature type="binding site" description="in inhibited form" evidence="1">
    <location>
        <position position="184"/>
    </location>
    <ligand>
        <name>Zn(2+)</name>
        <dbReference type="ChEBI" id="CHEBI:29105"/>
        <note>catalytic</note>
    </ligand>
</feature>
<feature type="binding site" evidence="2">
    <location>
        <position position="405"/>
    </location>
    <ligand>
        <name>Zn(2+)</name>
        <dbReference type="ChEBI" id="CHEBI:29105"/>
        <note>catalytic</note>
    </ligand>
</feature>
<feature type="binding site" evidence="2">
    <location>
        <position position="409"/>
    </location>
    <ligand>
        <name>Zn(2+)</name>
        <dbReference type="ChEBI" id="CHEBI:29105"/>
        <note>catalytic</note>
    </ligand>
</feature>
<feature type="binding site" evidence="2">
    <location>
        <position position="415"/>
    </location>
    <ligand>
        <name>Zn(2+)</name>
        <dbReference type="ChEBI" id="CHEBI:29105"/>
        <note>catalytic</note>
    </ligand>
</feature>
<feature type="modified residue" description="Phosphothreonine; by MAPK14" evidence="2">
    <location>
        <position position="735"/>
    </location>
</feature>
<feature type="modified residue" description="Phosphothreonine" evidence="2">
    <location>
        <position position="764"/>
    </location>
</feature>
<feature type="modified residue" description="Phosphoserine" evidence="10">
    <location>
        <position position="770"/>
    </location>
</feature>
<feature type="modified residue" description="Phosphoserine" evidence="10">
    <location>
        <position position="794"/>
    </location>
</feature>
<feature type="modified residue" description="Phosphoserine" evidence="2">
    <location>
        <position position="822"/>
    </location>
</feature>
<feature type="glycosylation site" description="N-linked (GlcNAc...) asparagine" evidence="4">
    <location>
        <position position="157"/>
    </location>
</feature>
<feature type="glycosylation site" description="N-linked (GlcNAc...) asparagine" evidence="4">
    <location>
        <position position="264"/>
    </location>
</feature>
<feature type="glycosylation site" description="N-linked (GlcNAc...) asparagine" evidence="4">
    <location>
        <position position="452"/>
    </location>
</feature>
<feature type="glycosylation site" description="N-linked (GlcNAc...) asparagine" evidence="4">
    <location>
        <position position="498"/>
    </location>
</feature>
<feature type="glycosylation site" description="N-linked (GlcNAc...) asparagine" evidence="4">
    <location>
        <position position="539"/>
    </location>
</feature>
<feature type="glycosylation site" description="N-linked (GlcNAc...) asparagine" evidence="4">
    <location>
        <position position="551"/>
    </location>
</feature>
<feature type="glycosylation site" description="N-linked (GlcNAc...) asparagine" evidence="4">
    <location>
        <position position="606"/>
    </location>
</feature>
<feature type="disulfide bond" evidence="2">
    <location>
        <begin position="225"/>
        <end position="333"/>
    </location>
</feature>
<feature type="disulfide bond" evidence="2">
    <location>
        <begin position="365"/>
        <end position="469"/>
    </location>
</feature>
<feature type="disulfide bond" evidence="2">
    <location>
        <begin position="423"/>
        <end position="453"/>
    </location>
</feature>
<feature type="disulfide bond" evidence="1">
    <location>
        <begin position="534"/>
        <end position="555"/>
    </location>
</feature>
<feature type="disulfide bond" evidence="1">
    <location>
        <begin position="573"/>
        <end position="582"/>
    </location>
</feature>
<feature type="disulfide bond" evidence="1">
    <location>
        <begin position="578"/>
        <end position="591"/>
    </location>
</feature>
<feature type="disulfide bond" evidence="1">
    <location>
        <begin position="593"/>
        <end position="600"/>
    </location>
</feature>